<dbReference type="EC" id="4.1.1.32" evidence="2"/>
<dbReference type="EC" id="2.7.11.-" evidence="2"/>
<dbReference type="EMBL" id="CR860867">
    <property type="protein sequence ID" value="CAH92975.1"/>
    <property type="molecule type" value="mRNA"/>
</dbReference>
<dbReference type="RefSeq" id="NP_001126758.1">
    <property type="nucleotide sequence ID" value="NM_001133286.1"/>
</dbReference>
<dbReference type="SMR" id="Q5R5J1"/>
<dbReference type="FunCoup" id="Q5R5J1">
    <property type="interactions" value="1209"/>
</dbReference>
<dbReference type="STRING" id="9601.ENSPPYP00000012471"/>
<dbReference type="GeneID" id="100173760"/>
<dbReference type="KEGG" id="pon:100173760"/>
<dbReference type="CTD" id="5105"/>
<dbReference type="eggNOG" id="KOG3749">
    <property type="taxonomic scope" value="Eukaryota"/>
</dbReference>
<dbReference type="InParanoid" id="Q5R5J1"/>
<dbReference type="OrthoDB" id="5841594at2759"/>
<dbReference type="UniPathway" id="UPA00138"/>
<dbReference type="Proteomes" id="UP000001595">
    <property type="component" value="Unplaced"/>
</dbReference>
<dbReference type="GO" id="GO:0005829">
    <property type="term" value="C:cytosol"/>
    <property type="evidence" value="ECO:0000250"/>
    <property type="project" value="UniProtKB"/>
</dbReference>
<dbReference type="GO" id="GO:0005783">
    <property type="term" value="C:endoplasmic reticulum"/>
    <property type="evidence" value="ECO:0000250"/>
    <property type="project" value="UniProtKB"/>
</dbReference>
<dbReference type="GO" id="GO:0005525">
    <property type="term" value="F:GTP binding"/>
    <property type="evidence" value="ECO:0007669"/>
    <property type="project" value="UniProtKB-KW"/>
</dbReference>
<dbReference type="GO" id="GO:0030145">
    <property type="term" value="F:manganese ion binding"/>
    <property type="evidence" value="ECO:0007669"/>
    <property type="project" value="TreeGrafter"/>
</dbReference>
<dbReference type="GO" id="GO:0004613">
    <property type="term" value="F:phosphoenolpyruvate carboxykinase (GTP) activity"/>
    <property type="evidence" value="ECO:0000250"/>
    <property type="project" value="UniProtKB"/>
</dbReference>
<dbReference type="GO" id="GO:0106264">
    <property type="term" value="F:protein serine kinase activity (using GTP as donor)"/>
    <property type="evidence" value="ECO:0000250"/>
    <property type="project" value="UniProtKB"/>
</dbReference>
<dbReference type="GO" id="GO:0071549">
    <property type="term" value="P:cellular response to dexamethasone stimulus"/>
    <property type="evidence" value="ECO:0007669"/>
    <property type="project" value="TreeGrafter"/>
</dbReference>
<dbReference type="GO" id="GO:0071333">
    <property type="term" value="P:cellular response to glucose stimulus"/>
    <property type="evidence" value="ECO:0000250"/>
    <property type="project" value="UniProtKB"/>
</dbReference>
<dbReference type="GO" id="GO:0032869">
    <property type="term" value="P:cellular response to insulin stimulus"/>
    <property type="evidence" value="ECO:0000250"/>
    <property type="project" value="UniProtKB"/>
</dbReference>
<dbReference type="GO" id="GO:0006094">
    <property type="term" value="P:gluconeogenesis"/>
    <property type="evidence" value="ECO:0007669"/>
    <property type="project" value="UniProtKB-UniPathway"/>
</dbReference>
<dbReference type="GO" id="GO:0046327">
    <property type="term" value="P:glycerol biosynthetic process from pyruvate"/>
    <property type="evidence" value="ECO:0007669"/>
    <property type="project" value="TreeGrafter"/>
</dbReference>
<dbReference type="GO" id="GO:0070365">
    <property type="term" value="P:hepatocyte differentiation"/>
    <property type="evidence" value="ECO:0007669"/>
    <property type="project" value="TreeGrafter"/>
</dbReference>
<dbReference type="GO" id="GO:0006107">
    <property type="term" value="P:oxaloacetate metabolic process"/>
    <property type="evidence" value="ECO:0000250"/>
    <property type="project" value="UniProtKB"/>
</dbReference>
<dbReference type="GO" id="GO:0018105">
    <property type="term" value="P:peptidyl-serine phosphorylation"/>
    <property type="evidence" value="ECO:0000250"/>
    <property type="project" value="UniProtKB"/>
</dbReference>
<dbReference type="GO" id="GO:0043382">
    <property type="term" value="P:positive regulation of memory T cell differentiation"/>
    <property type="evidence" value="ECO:0000250"/>
    <property type="project" value="UniProtKB"/>
</dbReference>
<dbReference type="GO" id="GO:0019543">
    <property type="term" value="P:propionate catabolic process"/>
    <property type="evidence" value="ECO:0007669"/>
    <property type="project" value="TreeGrafter"/>
</dbReference>
<dbReference type="GO" id="GO:0046890">
    <property type="term" value="P:regulation of lipid biosynthetic process"/>
    <property type="evidence" value="ECO:0000250"/>
    <property type="project" value="UniProtKB"/>
</dbReference>
<dbReference type="GO" id="GO:0042594">
    <property type="term" value="P:response to starvation"/>
    <property type="evidence" value="ECO:0007669"/>
    <property type="project" value="TreeGrafter"/>
</dbReference>
<dbReference type="CDD" id="cd00819">
    <property type="entry name" value="PEPCK_GTP"/>
    <property type="match status" value="1"/>
</dbReference>
<dbReference type="FunFam" id="3.90.228.20:FF:000005">
    <property type="entry name" value="Phosphoenolpyruvate carboxykinase [GTP], mitochondrial"/>
    <property type="match status" value="1"/>
</dbReference>
<dbReference type="FunFam" id="2.170.8.10:FF:000006">
    <property type="entry name" value="Phosphoenolpyruvate carboxykinase, cytosolic [GTP]"/>
    <property type="match status" value="1"/>
</dbReference>
<dbReference type="FunFam" id="3.40.449.10:FF:000003">
    <property type="entry name" value="Phosphoenolpyruvate carboxykinase, cytosolic [GTP]"/>
    <property type="match status" value="1"/>
</dbReference>
<dbReference type="Gene3D" id="3.90.228.20">
    <property type="match status" value="1"/>
</dbReference>
<dbReference type="Gene3D" id="3.40.449.10">
    <property type="entry name" value="Phosphoenolpyruvate Carboxykinase, domain 1"/>
    <property type="match status" value="1"/>
</dbReference>
<dbReference type="Gene3D" id="2.170.8.10">
    <property type="entry name" value="Phosphoenolpyruvate Carboxykinase, domain 2"/>
    <property type="match status" value="1"/>
</dbReference>
<dbReference type="HAMAP" id="MF_00452">
    <property type="entry name" value="PEPCK_GTP"/>
    <property type="match status" value="1"/>
</dbReference>
<dbReference type="InterPro" id="IPR018091">
    <property type="entry name" value="PEP_carboxykin_GTP_CS"/>
</dbReference>
<dbReference type="InterPro" id="IPR013035">
    <property type="entry name" value="PEP_carboxykinase_C"/>
</dbReference>
<dbReference type="InterPro" id="IPR008209">
    <property type="entry name" value="PEP_carboxykinase_GTP"/>
</dbReference>
<dbReference type="InterPro" id="IPR035077">
    <property type="entry name" value="PEP_carboxykinase_GTP_C"/>
</dbReference>
<dbReference type="InterPro" id="IPR035078">
    <property type="entry name" value="PEP_carboxykinase_GTP_N"/>
</dbReference>
<dbReference type="InterPro" id="IPR008210">
    <property type="entry name" value="PEP_carboxykinase_N"/>
</dbReference>
<dbReference type="NCBIfam" id="NF003253">
    <property type="entry name" value="PRK04210.1"/>
    <property type="match status" value="1"/>
</dbReference>
<dbReference type="PANTHER" id="PTHR11561">
    <property type="entry name" value="PHOSPHOENOLPYRUVATE CARBOXYKINASE"/>
    <property type="match status" value="1"/>
</dbReference>
<dbReference type="PANTHER" id="PTHR11561:SF18">
    <property type="entry name" value="PHOSPHOENOLPYRUVATE CARBOXYKINASE, CYTOSOLIC [GTP]"/>
    <property type="match status" value="1"/>
</dbReference>
<dbReference type="Pfam" id="PF00821">
    <property type="entry name" value="PEPCK_GTP"/>
    <property type="match status" value="1"/>
</dbReference>
<dbReference type="Pfam" id="PF17297">
    <property type="entry name" value="PEPCK_N"/>
    <property type="match status" value="1"/>
</dbReference>
<dbReference type="PIRSF" id="PIRSF001348">
    <property type="entry name" value="PEP_carboxykinase_GTP"/>
    <property type="match status" value="1"/>
</dbReference>
<dbReference type="SUPFAM" id="SSF68923">
    <property type="entry name" value="PEP carboxykinase N-terminal domain"/>
    <property type="match status" value="1"/>
</dbReference>
<dbReference type="SUPFAM" id="SSF53795">
    <property type="entry name" value="PEP carboxykinase-like"/>
    <property type="match status" value="1"/>
</dbReference>
<dbReference type="PROSITE" id="PS00505">
    <property type="entry name" value="PEPCK_GTP"/>
    <property type="match status" value="1"/>
</dbReference>
<name>PCKGC_PONAB</name>
<accession>Q5R5J1</accession>
<sequence>MPPQLQNGLNLSAKVVQGSLDSLPQAVRKFLENNAELCQPDHIHICDGSEEENGRLLGQMEEEGILRRLKKYDNCWLALTDPRDVARIGSKTVIVTQEQRDTVPIPKTGLSQLGRWMSEEDFEKALNARFPGCMKGRTMYVIPFSMGPLGSPLSKIGIELTDSPYVVASMRIMTRMGTPVLEALGDGEFVKCLHSVGCPLPLQKPLVNNWPCNPELTLIAHLPDRREIISFGSGYGGNSLLGKKCFALRMASRLAKEEGWLAEHMLILGITNPEGEKKYLAAAFPSACGKTNLAMMNPSLPGWKVECVGDDIAWMKFDAQGHLRAINPENGFFGVAPGTSVKTNPNAIKTIQKNTIFTNVAETSDGGVYWEGIDEPLASGVTITSWKNKEWSPEDGEPCAHPNSRFCTPASQCPIIDAAWESPEGVPIEGIIFGGRRPAGVPLVYEALSWQHGVFVGAAMRSEATAAAEHKGKIIMHDPFAMRPFFGYNFGKYLAHWLSMAQHPAAKLPKIFHVNWFRKDKEGKFLWPGFGENSRVLEWMFNRIDGKAGAKLTPIGYIPKEDALNLKGLGHINVMELFSISKEFWEKEVEDIEKYLEDQVNADLPCEIEREILALKQRISQM</sequence>
<comment type="function">
    <text evidence="2 4">Cytosolic phosphoenolpyruvate carboxykinase that catalyzes the reversible decarboxylation and phosphorylation of oxaloacetate (OAA) and acts as the rate-limiting enzyme in gluconeogenesis. Regulates cataplerosis and anaplerosis, the processes that control the levels of metabolic intermediates in the citric acid cycle. At low glucose levels, it catalyzes the cataplerotic conversion of oxaloacetate to phosphoenolpyruvate (PEP), the rate-limiting step in the metabolic pathway that produces glucose from lactate and other precursors derived from the citric acid cycle. At high glucose levels, it catalyzes the anaplerotic conversion of phosphoenolpyruvate to oxaloacetate (By similarity). Acts as a regulator of formation and maintenance of memory CD8(+) T-cells: up-regulated in these cells, where it generates phosphoenolpyruvate, via gluconeogenesis. The resultant phosphoenolpyruvate flows to glycogen and pentose phosphate pathway, which is essential for memory CD8(+) T-cells homeostasis (By similarity). In addition to the phosphoenolpyruvate carboxykinase activity, also acts as a protein kinase when phosphorylated at Ser-90: phosphorylation at Ser-90 by AKT1 reduces the binding affinity to oxaloacetate and promotes an atypical serine protein kinase activity using GTP as donor. The protein kinase activity regulates lipogenesis: upon phosphorylation at Ser-90, translocates to the endoplasmic reticulum and catalyzes phosphorylation of INSIG proteins (INSIG1 and INSIG2), thereby disrupting the interaction between INSIG proteins and SCAP and promoting nuclear translocation of SREBP proteins (SREBF1/SREBP1 or SREBF2/SREBP2) and subsequent transcription of downstream lipogenesis-related genes (By similarity).</text>
</comment>
<comment type="catalytic activity">
    <reaction evidence="2">
        <text>oxaloacetate + GTP = phosphoenolpyruvate + GDP + CO2</text>
        <dbReference type="Rhea" id="RHEA:10388"/>
        <dbReference type="ChEBI" id="CHEBI:16452"/>
        <dbReference type="ChEBI" id="CHEBI:16526"/>
        <dbReference type="ChEBI" id="CHEBI:37565"/>
        <dbReference type="ChEBI" id="CHEBI:58189"/>
        <dbReference type="ChEBI" id="CHEBI:58702"/>
        <dbReference type="EC" id="4.1.1.32"/>
    </reaction>
    <physiologicalReaction direction="left-to-right" evidence="2">
        <dbReference type="Rhea" id="RHEA:10389"/>
    </physiologicalReaction>
    <physiologicalReaction direction="right-to-left" evidence="2">
        <dbReference type="Rhea" id="RHEA:10390"/>
    </physiologicalReaction>
</comment>
<comment type="catalytic activity">
    <reaction evidence="2">
        <text>L-seryl-[protein] + GTP = O-phospho-L-seryl-[protein] + GDP + H(+)</text>
        <dbReference type="Rhea" id="RHEA:64020"/>
        <dbReference type="Rhea" id="RHEA-COMP:9863"/>
        <dbReference type="Rhea" id="RHEA-COMP:11604"/>
        <dbReference type="ChEBI" id="CHEBI:15378"/>
        <dbReference type="ChEBI" id="CHEBI:29999"/>
        <dbReference type="ChEBI" id="CHEBI:37565"/>
        <dbReference type="ChEBI" id="CHEBI:58189"/>
        <dbReference type="ChEBI" id="CHEBI:83421"/>
    </reaction>
    <physiologicalReaction direction="left-to-right" evidence="2">
        <dbReference type="Rhea" id="RHEA:64021"/>
    </physiologicalReaction>
</comment>
<comment type="cofactor">
    <cofactor evidence="2">
        <name>Mn(2+)</name>
        <dbReference type="ChEBI" id="CHEBI:29035"/>
    </cofactor>
    <text evidence="2">Binds 1 Mn(2+) ion per subunit.</text>
</comment>
<comment type="activity regulation">
    <text evidence="1 2">Phosphoenolpyruvate carboxykinase activity is regulated by acetylation and glucose levels (By similarity). The anaplerotic conversion of phosphoenolpyruvate to oxaloacetate is improved by PCK1 acetylation on Lys-91 (K91ac), Lys-473 (K473ac) and Lys-521 (K521ac) (By similarity). High glucose concentrations favor PCK1 anaplerotic activity by triggering acetylation on Lys-91 (K91ac). At low glucose levels, SIRT1-mediated deacetylation of Lys-91 promotes the cataplerotic conversion of oxaloacetate to phosphoenolpyruvate. Phosphorylation at Ser-90 reduces the binding affinity to oxaloacetate and converts the enzyme into an atypical protein kinase using GTP as donor (By similarity).</text>
</comment>
<comment type="pathway">
    <text evidence="2">Carbohydrate biosynthesis; gluconeogenesis.</text>
</comment>
<comment type="subunit">
    <text evidence="2">Monomer.</text>
</comment>
<comment type="subcellular location">
    <subcellularLocation>
        <location evidence="2">Cytoplasm</location>
        <location evidence="2">Cytosol</location>
    </subcellularLocation>
    <subcellularLocation>
        <location evidence="2">Endoplasmic reticulum</location>
    </subcellularLocation>
    <text evidence="2">Phosphorylation at Ser-90 promotes translocation to the endoplasmic reticulum.</text>
</comment>
<comment type="PTM">
    <text evidence="2">Acetylated. Lysine acetylation by p300/EP300 is increased on high glucose conditions. Lysine acetylation promotes ubiquitination by UBR5. Acetylation is enhanced in the presence of BAG6. Deacetylated by SIRT2. Deacetylation of Lys-91 is carried out by SIRT1 and depends on PCK1 phosphorylation levels.</text>
</comment>
<comment type="PTM">
    <text evidence="2">Phosphorylated in a GSK3B-mediated pathway; phosphorylation affects the efficiency of SIRT1-mediated deacetylation, and regulates PCK1 ubiquitination and degradation. Phosphorylation at Ser-90 by AKT1 reduces the binding affinity to oxaloacetate and promotes the protein kinase activity: phosphorylated PCK1 translocates to the endoplasmic reticulum, where it phosphorylates INSIG1 and INSIG2.</text>
</comment>
<comment type="PTM">
    <text evidence="2">Ubiquitination by UBR5 leads to proteasomal degradation.</text>
</comment>
<comment type="miscellaneous">
    <text>In eukaryotes there are two isozymes: a cytoplasmic one and a mitochondrial one.</text>
</comment>
<comment type="similarity">
    <text evidence="5">Belongs to the phosphoenolpyruvate carboxykinase [GTP] family.</text>
</comment>
<gene>
    <name evidence="2" type="primary">PCK1</name>
    <name type="synonym">PPCK1</name>
</gene>
<protein>
    <recommendedName>
        <fullName evidence="5">Phosphoenolpyruvate carboxykinase, cytosolic [GTP]</fullName>
        <shortName>PEPCK-C</shortName>
        <ecNumber evidence="2">4.1.1.32</ecNumber>
    </recommendedName>
    <alternativeName>
        <fullName evidence="5">Serine-protein kinase PCK1</fullName>
        <ecNumber evidence="2">2.7.11.-</ecNumber>
    </alternativeName>
</protein>
<organism>
    <name type="scientific">Pongo abelii</name>
    <name type="common">Sumatran orangutan</name>
    <name type="synonym">Pongo pygmaeus abelii</name>
    <dbReference type="NCBI Taxonomy" id="9601"/>
    <lineage>
        <taxon>Eukaryota</taxon>
        <taxon>Metazoa</taxon>
        <taxon>Chordata</taxon>
        <taxon>Craniata</taxon>
        <taxon>Vertebrata</taxon>
        <taxon>Euteleostomi</taxon>
        <taxon>Mammalia</taxon>
        <taxon>Eutheria</taxon>
        <taxon>Euarchontoglires</taxon>
        <taxon>Primates</taxon>
        <taxon>Haplorrhini</taxon>
        <taxon>Catarrhini</taxon>
        <taxon>Hominidae</taxon>
        <taxon>Pongo</taxon>
    </lineage>
</organism>
<keyword id="KW-0007">Acetylation</keyword>
<keyword id="KW-0963">Cytoplasm</keyword>
<keyword id="KW-0210">Decarboxylase</keyword>
<keyword id="KW-0256">Endoplasmic reticulum</keyword>
<keyword id="KW-0312">Gluconeogenesis</keyword>
<keyword id="KW-0342">GTP-binding</keyword>
<keyword id="KW-0418">Kinase</keyword>
<keyword id="KW-0456">Lyase</keyword>
<keyword id="KW-0464">Manganese</keyword>
<keyword id="KW-0479">Metal-binding</keyword>
<keyword id="KW-0547">Nucleotide-binding</keyword>
<keyword id="KW-0597">Phosphoprotein</keyword>
<keyword id="KW-1185">Reference proteome</keyword>
<keyword id="KW-0808">Transferase</keyword>
<keyword id="KW-0832">Ubl conjugation</keyword>
<feature type="chain" id="PRO_0000103629" description="Phosphoenolpyruvate carboxykinase, cytosolic [GTP]">
    <location>
        <begin position="1"/>
        <end position="622"/>
    </location>
</feature>
<feature type="region of interest" description="Omega-loop" evidence="1">
    <location>
        <begin position="457"/>
        <end position="487"/>
    </location>
</feature>
<feature type="active site" evidence="1">
    <location>
        <position position="288"/>
    </location>
</feature>
<feature type="binding site" evidence="1">
    <location>
        <position position="87"/>
    </location>
    <ligand>
        <name>substrate</name>
    </ligand>
</feature>
<feature type="binding site" evidence="1">
    <location>
        <begin position="235"/>
        <end position="237"/>
    </location>
    <ligand>
        <name>substrate</name>
    </ligand>
</feature>
<feature type="binding site" evidence="1">
    <location>
        <position position="244"/>
    </location>
    <ligand>
        <name>Mn(2+)</name>
        <dbReference type="ChEBI" id="CHEBI:29035"/>
    </ligand>
</feature>
<feature type="binding site" evidence="1">
    <location>
        <position position="264"/>
    </location>
    <ligand>
        <name>Mn(2+)</name>
        <dbReference type="ChEBI" id="CHEBI:29035"/>
    </ligand>
</feature>
<feature type="binding site" evidence="1">
    <location>
        <position position="286"/>
    </location>
    <ligand>
        <name>substrate</name>
    </ligand>
</feature>
<feature type="binding site" evidence="1">
    <location>
        <begin position="287"/>
        <end position="292"/>
    </location>
    <ligand>
        <name>GTP</name>
        <dbReference type="ChEBI" id="CHEBI:37565"/>
    </ligand>
</feature>
<feature type="binding site" evidence="1">
    <location>
        <position position="311"/>
    </location>
    <ligand>
        <name>Mn(2+)</name>
        <dbReference type="ChEBI" id="CHEBI:29035"/>
    </ligand>
</feature>
<feature type="binding site" evidence="1">
    <location>
        <begin position="403"/>
        <end position="405"/>
    </location>
    <ligand>
        <name>substrate</name>
    </ligand>
</feature>
<feature type="binding site" evidence="1">
    <location>
        <position position="405"/>
    </location>
    <ligand>
        <name>GTP</name>
        <dbReference type="ChEBI" id="CHEBI:37565"/>
    </ligand>
</feature>
<feature type="binding site" evidence="1">
    <location>
        <position position="436"/>
    </location>
    <ligand>
        <name>GTP</name>
        <dbReference type="ChEBI" id="CHEBI:37565"/>
    </ligand>
</feature>
<feature type="binding site" evidence="1">
    <location>
        <begin position="530"/>
        <end position="533"/>
    </location>
    <ligand>
        <name>GTP</name>
        <dbReference type="ChEBI" id="CHEBI:37565"/>
    </ligand>
</feature>
<feature type="modified residue" description="Phosphoserine" evidence="2">
    <location>
        <position position="19"/>
    </location>
</feature>
<feature type="modified residue" description="N6-acetyllysine; by p300/EP300" evidence="2">
    <location>
        <position position="70"/>
    </location>
</feature>
<feature type="modified residue" description="N6-acetyllysine; by p300/EP300" evidence="2">
    <location>
        <position position="71"/>
    </location>
</feature>
<feature type="modified residue" description="Phosphoserine" evidence="2">
    <location>
        <position position="90"/>
    </location>
</feature>
<feature type="modified residue" description="N6-acetyllysine" evidence="1 2">
    <location>
        <position position="91"/>
    </location>
</feature>
<feature type="modified residue" description="Phosphoserine" evidence="4">
    <location>
        <position position="118"/>
    </location>
</feature>
<feature type="modified residue" description="Phosphothreonine" evidence="3">
    <location>
        <position position="178"/>
    </location>
</feature>
<feature type="modified residue" description="Phosphoserine" evidence="3">
    <location>
        <position position="286"/>
    </location>
</feature>
<feature type="modified residue" description="N6-acetyllysine" evidence="1">
    <location>
        <position position="473"/>
    </location>
</feature>
<feature type="modified residue" description="N6-acetyllysine" evidence="1">
    <location>
        <position position="521"/>
    </location>
</feature>
<feature type="modified residue" description="N6-acetyllysine" evidence="1">
    <location>
        <position position="524"/>
    </location>
</feature>
<feature type="modified residue" description="N6-acetyllysine; by p300/EP300" evidence="2">
    <location>
        <position position="594"/>
    </location>
</feature>
<proteinExistence type="evidence at transcript level"/>
<evidence type="ECO:0000250" key="1">
    <source>
        <dbReference type="UniProtKB" id="P07379"/>
    </source>
</evidence>
<evidence type="ECO:0000250" key="2">
    <source>
        <dbReference type="UniProtKB" id="P35558"/>
    </source>
</evidence>
<evidence type="ECO:0000250" key="3">
    <source>
        <dbReference type="UniProtKB" id="Q16822"/>
    </source>
</evidence>
<evidence type="ECO:0000250" key="4">
    <source>
        <dbReference type="UniProtKB" id="Q9Z2V4"/>
    </source>
</evidence>
<evidence type="ECO:0000305" key="5"/>
<reference key="1">
    <citation type="submission" date="2004-11" db="EMBL/GenBank/DDBJ databases">
        <authorList>
            <consortium name="The German cDNA consortium"/>
        </authorList>
    </citation>
    <scope>NUCLEOTIDE SEQUENCE [LARGE SCALE MRNA]</scope>
    <source>
        <tissue>Kidney</tissue>
    </source>
</reference>